<feature type="chain" id="PRO_1000184539" description="ATP synthase subunit c">
    <location>
        <begin position="1"/>
        <end position="79"/>
    </location>
</feature>
<feature type="transmembrane region" description="Helical" evidence="1">
    <location>
        <begin position="11"/>
        <end position="31"/>
    </location>
</feature>
<feature type="transmembrane region" description="Helical" evidence="1">
    <location>
        <begin position="53"/>
        <end position="73"/>
    </location>
</feature>
<feature type="site" description="Reversibly protonated during proton transport" evidence="1">
    <location>
        <position position="61"/>
    </location>
</feature>
<gene>
    <name evidence="1" type="primary">atpE</name>
    <name type="ordered locus">YpsIP31758_4181</name>
</gene>
<sequence>MENLNMDLLYMAAAVMMGLAAIGAAIGIGILGGKFLEGAARQPDLIPLLRTQFFIVMGLVDAIPMIAVGLGLYVMFAVA</sequence>
<dbReference type="EMBL" id="CP000720">
    <property type="protein sequence ID" value="ABS49337.1"/>
    <property type="molecule type" value="Genomic_DNA"/>
</dbReference>
<dbReference type="RefSeq" id="WP_000429386.1">
    <property type="nucleotide sequence ID" value="NC_009708.1"/>
</dbReference>
<dbReference type="BMRB" id="A7FPE5"/>
<dbReference type="SMR" id="A7FPE5"/>
<dbReference type="GeneID" id="98390858"/>
<dbReference type="KEGG" id="ypi:YpsIP31758_4181"/>
<dbReference type="HOGENOM" id="CLU_148047_1_0_6"/>
<dbReference type="Proteomes" id="UP000002412">
    <property type="component" value="Chromosome"/>
</dbReference>
<dbReference type="GO" id="GO:0005886">
    <property type="term" value="C:plasma membrane"/>
    <property type="evidence" value="ECO:0007669"/>
    <property type="project" value="UniProtKB-SubCell"/>
</dbReference>
<dbReference type="GO" id="GO:0045259">
    <property type="term" value="C:proton-transporting ATP synthase complex"/>
    <property type="evidence" value="ECO:0007669"/>
    <property type="project" value="UniProtKB-KW"/>
</dbReference>
<dbReference type="GO" id="GO:0033177">
    <property type="term" value="C:proton-transporting two-sector ATPase complex, proton-transporting domain"/>
    <property type="evidence" value="ECO:0007669"/>
    <property type="project" value="InterPro"/>
</dbReference>
<dbReference type="GO" id="GO:0008289">
    <property type="term" value="F:lipid binding"/>
    <property type="evidence" value="ECO:0007669"/>
    <property type="project" value="UniProtKB-KW"/>
</dbReference>
<dbReference type="GO" id="GO:0046933">
    <property type="term" value="F:proton-transporting ATP synthase activity, rotational mechanism"/>
    <property type="evidence" value="ECO:0007669"/>
    <property type="project" value="UniProtKB-UniRule"/>
</dbReference>
<dbReference type="CDD" id="cd18185">
    <property type="entry name" value="ATP-synt_Fo_c_ATPE"/>
    <property type="match status" value="1"/>
</dbReference>
<dbReference type="FunFam" id="1.20.20.10:FF:000002">
    <property type="entry name" value="ATP synthase subunit c"/>
    <property type="match status" value="1"/>
</dbReference>
<dbReference type="Gene3D" id="1.20.20.10">
    <property type="entry name" value="F1F0 ATP synthase subunit C"/>
    <property type="match status" value="1"/>
</dbReference>
<dbReference type="HAMAP" id="MF_01396">
    <property type="entry name" value="ATP_synth_c_bact"/>
    <property type="match status" value="1"/>
</dbReference>
<dbReference type="InterPro" id="IPR005953">
    <property type="entry name" value="ATP_synth_csu_bac/chlpt"/>
</dbReference>
<dbReference type="InterPro" id="IPR000454">
    <property type="entry name" value="ATP_synth_F0_csu"/>
</dbReference>
<dbReference type="InterPro" id="IPR020537">
    <property type="entry name" value="ATP_synth_F0_csu_DDCD_BS"/>
</dbReference>
<dbReference type="InterPro" id="IPR038662">
    <property type="entry name" value="ATP_synth_F0_csu_sf"/>
</dbReference>
<dbReference type="InterPro" id="IPR002379">
    <property type="entry name" value="ATPase_proteolipid_c-like_dom"/>
</dbReference>
<dbReference type="InterPro" id="IPR035921">
    <property type="entry name" value="F/V-ATP_Csub_sf"/>
</dbReference>
<dbReference type="NCBIfam" id="TIGR01260">
    <property type="entry name" value="ATP_synt_c"/>
    <property type="match status" value="1"/>
</dbReference>
<dbReference type="NCBIfam" id="NF005363">
    <property type="entry name" value="PRK06876.1"/>
    <property type="match status" value="1"/>
</dbReference>
<dbReference type="Pfam" id="PF00137">
    <property type="entry name" value="ATP-synt_C"/>
    <property type="match status" value="1"/>
</dbReference>
<dbReference type="PRINTS" id="PR00124">
    <property type="entry name" value="ATPASEC"/>
</dbReference>
<dbReference type="SUPFAM" id="SSF81333">
    <property type="entry name" value="F1F0 ATP synthase subunit C"/>
    <property type="match status" value="1"/>
</dbReference>
<dbReference type="PROSITE" id="PS00605">
    <property type="entry name" value="ATPASE_C"/>
    <property type="match status" value="1"/>
</dbReference>
<reference key="1">
    <citation type="journal article" date="2007" name="PLoS Genet.">
        <title>The complete genome sequence of Yersinia pseudotuberculosis IP31758, the causative agent of Far East scarlet-like fever.</title>
        <authorList>
            <person name="Eppinger M."/>
            <person name="Rosovitz M.J."/>
            <person name="Fricke W.F."/>
            <person name="Rasko D.A."/>
            <person name="Kokorina G."/>
            <person name="Fayolle C."/>
            <person name="Lindler L.E."/>
            <person name="Carniel E."/>
            <person name="Ravel J."/>
        </authorList>
    </citation>
    <scope>NUCLEOTIDE SEQUENCE [LARGE SCALE GENOMIC DNA]</scope>
    <source>
        <strain>IP 31758</strain>
    </source>
</reference>
<comment type="function">
    <text evidence="1">F(1)F(0) ATP synthase produces ATP from ADP in the presence of a proton or sodium gradient. F-type ATPases consist of two structural domains, F(1) containing the extramembraneous catalytic core and F(0) containing the membrane proton channel, linked together by a central stalk and a peripheral stalk. During catalysis, ATP synthesis in the catalytic domain of F(1) is coupled via a rotary mechanism of the central stalk subunits to proton translocation.</text>
</comment>
<comment type="function">
    <text evidence="1">Key component of the F(0) channel; it plays a direct role in translocation across the membrane. A homomeric c-ring of between 10-14 subunits forms the central stalk rotor element with the F(1) delta and epsilon subunits.</text>
</comment>
<comment type="subunit">
    <text evidence="1">F-type ATPases have 2 components, F(1) - the catalytic core - and F(0) - the membrane proton channel. F(1) has five subunits: alpha(3), beta(3), gamma(1), delta(1), epsilon(1). F(0) has three main subunits: a(1), b(2) and c(10-14). The alpha and beta chains form an alternating ring which encloses part of the gamma chain. F(1) is attached to F(0) by a central stalk formed by the gamma and epsilon chains, while a peripheral stalk is formed by the delta and b chains.</text>
</comment>
<comment type="subcellular location">
    <subcellularLocation>
        <location evidence="1">Cell inner membrane</location>
        <topology evidence="1">Multi-pass membrane protein</topology>
    </subcellularLocation>
</comment>
<comment type="similarity">
    <text evidence="1">Belongs to the ATPase C chain family.</text>
</comment>
<protein>
    <recommendedName>
        <fullName evidence="1">ATP synthase subunit c</fullName>
    </recommendedName>
    <alternativeName>
        <fullName evidence="1">ATP synthase F(0) sector subunit c</fullName>
    </alternativeName>
    <alternativeName>
        <fullName evidence="1">F-type ATPase subunit c</fullName>
        <shortName evidence="1">F-ATPase subunit c</shortName>
    </alternativeName>
    <alternativeName>
        <fullName evidence="1">Lipid-binding protein</fullName>
    </alternativeName>
</protein>
<evidence type="ECO:0000255" key="1">
    <source>
        <dbReference type="HAMAP-Rule" id="MF_01396"/>
    </source>
</evidence>
<name>ATPL_YERP3</name>
<organism>
    <name type="scientific">Yersinia pseudotuberculosis serotype O:1b (strain IP 31758)</name>
    <dbReference type="NCBI Taxonomy" id="349747"/>
    <lineage>
        <taxon>Bacteria</taxon>
        <taxon>Pseudomonadati</taxon>
        <taxon>Pseudomonadota</taxon>
        <taxon>Gammaproteobacteria</taxon>
        <taxon>Enterobacterales</taxon>
        <taxon>Yersiniaceae</taxon>
        <taxon>Yersinia</taxon>
    </lineage>
</organism>
<keyword id="KW-0066">ATP synthesis</keyword>
<keyword id="KW-0997">Cell inner membrane</keyword>
<keyword id="KW-1003">Cell membrane</keyword>
<keyword id="KW-0138">CF(0)</keyword>
<keyword id="KW-0375">Hydrogen ion transport</keyword>
<keyword id="KW-0406">Ion transport</keyword>
<keyword id="KW-0446">Lipid-binding</keyword>
<keyword id="KW-0472">Membrane</keyword>
<keyword id="KW-0812">Transmembrane</keyword>
<keyword id="KW-1133">Transmembrane helix</keyword>
<keyword id="KW-0813">Transport</keyword>
<accession>A7FPE5</accession>
<proteinExistence type="inferred from homology"/>